<gene>
    <name type="primary">BPGM</name>
</gene>
<organism>
    <name type="scientific">Bos taurus</name>
    <name type="common">Bovine</name>
    <dbReference type="NCBI Taxonomy" id="9913"/>
    <lineage>
        <taxon>Eukaryota</taxon>
        <taxon>Metazoa</taxon>
        <taxon>Chordata</taxon>
        <taxon>Craniata</taxon>
        <taxon>Vertebrata</taxon>
        <taxon>Euteleostomi</taxon>
        <taxon>Mammalia</taxon>
        <taxon>Eutheria</taxon>
        <taxon>Laurasiatheria</taxon>
        <taxon>Artiodactyla</taxon>
        <taxon>Ruminantia</taxon>
        <taxon>Pecora</taxon>
        <taxon>Bovidae</taxon>
        <taxon>Bovinae</taxon>
        <taxon>Bos</taxon>
    </lineage>
</organism>
<proteinExistence type="evidence at transcript level"/>
<accession>Q3T014</accession>
<feature type="initiator methionine" description="Removed" evidence="2">
    <location>
        <position position="1"/>
    </location>
</feature>
<feature type="chain" id="PRO_0000268183" description="Bisphosphoglycerate mutase">
    <location>
        <begin position="2"/>
        <end position="259"/>
    </location>
</feature>
<feature type="active site" description="Tele-phosphohistidine intermediate" evidence="2">
    <location>
        <position position="11"/>
    </location>
</feature>
<feature type="active site" description="Proton donor/acceptor" evidence="2">
    <location>
        <position position="89"/>
    </location>
</feature>
<feature type="binding site" evidence="2">
    <location>
        <begin position="10"/>
        <end position="17"/>
    </location>
    <ligand>
        <name>substrate</name>
    </ligand>
</feature>
<feature type="binding site" evidence="2">
    <location>
        <begin position="23"/>
        <end position="24"/>
    </location>
    <ligand>
        <name>substrate</name>
    </ligand>
</feature>
<feature type="binding site" evidence="2">
    <location>
        <position position="62"/>
    </location>
    <ligand>
        <name>substrate</name>
    </ligand>
</feature>
<feature type="binding site" evidence="2">
    <location>
        <begin position="89"/>
        <end position="92"/>
    </location>
    <ligand>
        <name>substrate</name>
    </ligand>
</feature>
<feature type="binding site" evidence="2">
    <location>
        <position position="100"/>
    </location>
    <ligand>
        <name>substrate</name>
    </ligand>
</feature>
<feature type="binding site" evidence="2">
    <location>
        <begin position="116"/>
        <end position="117"/>
    </location>
    <ligand>
        <name>substrate</name>
    </ligand>
</feature>
<feature type="binding site" evidence="2">
    <location>
        <begin position="189"/>
        <end position="190"/>
    </location>
    <ligand>
        <name>substrate</name>
    </ligand>
</feature>
<feature type="modified residue" description="N-acetylserine" evidence="2">
    <location>
        <position position="2"/>
    </location>
</feature>
<feature type="modified residue" description="Phosphothreonine" evidence="2">
    <location>
        <position position="122"/>
    </location>
</feature>
<evidence type="ECO:0000250" key="1"/>
<evidence type="ECO:0000250" key="2">
    <source>
        <dbReference type="UniProtKB" id="P07738"/>
    </source>
</evidence>
<evidence type="ECO:0000305" key="3"/>
<comment type="function">
    <text evidence="1">Plays a major role in regulating hemoglobin oxygen affinity by controlling the levels of its allosteric effector 2,3-bisphosphoglycerate (2,3-BPG). Also exhibits mutase (EC 5.4.2.11) activity.</text>
</comment>
<comment type="catalytic activity">
    <reaction evidence="2">
        <text>(2R)-3-phospho-glyceroyl phosphate = (2R)-2,3-bisphosphoglycerate + H(+)</text>
        <dbReference type="Rhea" id="RHEA:17765"/>
        <dbReference type="ChEBI" id="CHEBI:15378"/>
        <dbReference type="ChEBI" id="CHEBI:57604"/>
        <dbReference type="ChEBI" id="CHEBI:58248"/>
        <dbReference type="EC" id="5.4.2.4"/>
    </reaction>
</comment>
<comment type="catalytic activity">
    <reaction evidence="2">
        <text>(2R)-2-phosphoglycerate = (2R)-3-phosphoglycerate</text>
        <dbReference type="Rhea" id="RHEA:15901"/>
        <dbReference type="ChEBI" id="CHEBI:58272"/>
        <dbReference type="ChEBI" id="CHEBI:58289"/>
        <dbReference type="EC" id="5.4.2.11"/>
    </reaction>
</comment>
<comment type="activity regulation">
    <text evidence="2">At alkaline pH BPGM favors the synthase reaction; however, at lower pH the phosphatase reaction is dominant. Inhibited by citrate.</text>
</comment>
<comment type="subunit">
    <text evidence="2">Homodimer.</text>
</comment>
<comment type="similarity">
    <text evidence="3">Belongs to the phosphoglycerate mutase family. BPG-dependent PGAM subfamily.</text>
</comment>
<comment type="caution">
    <text evidence="3">Gln-187 is present instead of the conserved His which is expected to be an active site residue.</text>
</comment>
<dbReference type="EC" id="5.4.2.4" evidence="2"/>
<dbReference type="EC" id="5.4.2.11" evidence="2"/>
<dbReference type="EMBL" id="BC102611">
    <property type="protein sequence ID" value="AAI02612.1"/>
    <property type="molecule type" value="mRNA"/>
</dbReference>
<dbReference type="RefSeq" id="NP_001030479.1">
    <property type="nucleotide sequence ID" value="NM_001035402.2"/>
</dbReference>
<dbReference type="SMR" id="Q3T014"/>
<dbReference type="FunCoup" id="Q3T014">
    <property type="interactions" value="618"/>
</dbReference>
<dbReference type="STRING" id="9913.ENSBTAP00000011713"/>
<dbReference type="PaxDb" id="9913-ENSBTAP00000011713"/>
<dbReference type="GeneID" id="533785"/>
<dbReference type="KEGG" id="bta:533785"/>
<dbReference type="CTD" id="669"/>
<dbReference type="eggNOG" id="KOG0235">
    <property type="taxonomic scope" value="Eukaryota"/>
</dbReference>
<dbReference type="InParanoid" id="Q3T014"/>
<dbReference type="OrthoDB" id="354304at2759"/>
<dbReference type="Proteomes" id="UP000009136">
    <property type="component" value="Unplaced"/>
</dbReference>
<dbReference type="GO" id="GO:0004082">
    <property type="term" value="F:bisphosphoglycerate mutase activity"/>
    <property type="evidence" value="ECO:0007669"/>
    <property type="project" value="UniProtKB-EC"/>
</dbReference>
<dbReference type="GO" id="GO:0016787">
    <property type="term" value="F:hydrolase activity"/>
    <property type="evidence" value="ECO:0007669"/>
    <property type="project" value="UniProtKB-KW"/>
</dbReference>
<dbReference type="GO" id="GO:0004619">
    <property type="term" value="F:phosphoglycerate mutase activity"/>
    <property type="evidence" value="ECO:0007669"/>
    <property type="project" value="UniProtKB-EC"/>
</dbReference>
<dbReference type="GO" id="GO:0006096">
    <property type="term" value="P:glycolytic process"/>
    <property type="evidence" value="ECO:0007669"/>
    <property type="project" value="UniProtKB-KW"/>
</dbReference>
<dbReference type="CDD" id="cd07067">
    <property type="entry name" value="HP_PGM_like"/>
    <property type="match status" value="1"/>
</dbReference>
<dbReference type="FunFam" id="3.40.50.1240:FF:000012">
    <property type="entry name" value="Phosphoglycerate mutase 1"/>
    <property type="match status" value="1"/>
</dbReference>
<dbReference type="Gene3D" id="3.40.50.1240">
    <property type="entry name" value="Phosphoglycerate mutase-like"/>
    <property type="match status" value="1"/>
</dbReference>
<dbReference type="HAMAP" id="MF_01039">
    <property type="entry name" value="PGAM_GpmA"/>
    <property type="match status" value="1"/>
</dbReference>
<dbReference type="InterPro" id="IPR013078">
    <property type="entry name" value="His_Pase_superF_clade-1"/>
</dbReference>
<dbReference type="InterPro" id="IPR029033">
    <property type="entry name" value="His_PPase_superfam"/>
</dbReference>
<dbReference type="InterPro" id="IPR001345">
    <property type="entry name" value="PG/BPGM_mutase_AS"/>
</dbReference>
<dbReference type="InterPro" id="IPR005952">
    <property type="entry name" value="Phosphogly_mut1"/>
</dbReference>
<dbReference type="NCBIfam" id="TIGR01258">
    <property type="entry name" value="pgm_1"/>
    <property type="match status" value="1"/>
</dbReference>
<dbReference type="NCBIfam" id="NF010713">
    <property type="entry name" value="PRK14115.1"/>
    <property type="match status" value="1"/>
</dbReference>
<dbReference type="PANTHER" id="PTHR11931">
    <property type="entry name" value="PHOSPHOGLYCERATE MUTASE"/>
    <property type="match status" value="1"/>
</dbReference>
<dbReference type="Pfam" id="PF00300">
    <property type="entry name" value="His_Phos_1"/>
    <property type="match status" value="1"/>
</dbReference>
<dbReference type="PIRSF" id="PIRSF000709">
    <property type="entry name" value="6PFK_2-Ptase"/>
    <property type="match status" value="1"/>
</dbReference>
<dbReference type="SMART" id="SM00855">
    <property type="entry name" value="PGAM"/>
    <property type="match status" value="1"/>
</dbReference>
<dbReference type="SUPFAM" id="SSF53254">
    <property type="entry name" value="Phosphoglycerate mutase-like"/>
    <property type="match status" value="1"/>
</dbReference>
<dbReference type="PROSITE" id="PS00175">
    <property type="entry name" value="PG_MUTASE"/>
    <property type="match status" value="1"/>
</dbReference>
<keyword id="KW-0007">Acetylation</keyword>
<keyword id="KW-0324">Glycolysis</keyword>
<keyword id="KW-0378">Hydrolase</keyword>
<keyword id="KW-0413">Isomerase</keyword>
<keyword id="KW-0597">Phosphoprotein</keyword>
<keyword id="KW-1185">Reference proteome</keyword>
<sequence>MSKYKLIMLRHGEGAWNKENRFCSWVDQKLNSDGLQEARNCGKQLKALNFEFDLVFTSILNRSIHTAWLILEELGQEWVPVESSWRLNERHYGALISLNREQMALNHGEEQVRLWRRSYNVTPPPIEESHPYYHEIYNDRKYKVCDVPLDQLPRSESLKDVLERLLPYWNERIAPEVLRGKTVLISAQGNSCRALLKYLEGISDEEIINITLPTGVPILLELDENLRTVGPHQFLGDQEAIQAAIKKVDDQGKVKRADK</sequence>
<name>PMGE_BOVIN</name>
<protein>
    <recommendedName>
        <fullName>Bisphosphoglycerate mutase</fullName>
        <shortName>BPGM</shortName>
        <ecNumber evidence="2">5.4.2.4</ecNumber>
    </recommendedName>
    <alternativeName>
        <fullName>2,3-bisphosphoglycerate mutase, erythrocyte</fullName>
    </alternativeName>
    <alternativeName>
        <fullName>2,3-bisphosphoglycerate synthase</fullName>
        <ecNumber evidence="2">5.4.2.11</ecNumber>
    </alternativeName>
    <alternativeName>
        <fullName>BPG-dependent PGAM</fullName>
    </alternativeName>
</protein>
<reference key="1">
    <citation type="submission" date="2005-08" db="EMBL/GenBank/DDBJ databases">
        <authorList>
            <consortium name="NIH - Mammalian Gene Collection (MGC) project"/>
        </authorList>
    </citation>
    <scope>NUCLEOTIDE SEQUENCE [LARGE SCALE MRNA]</scope>
    <source>
        <strain>Crossbred X Angus</strain>
        <tissue>Liver</tissue>
    </source>
</reference>